<gene>
    <name evidence="1" type="primary">GATC</name>
    <name type="synonym">15E1.2</name>
</gene>
<dbReference type="EC" id="6.3.5.-" evidence="1"/>
<dbReference type="EMBL" id="AK094319">
    <property type="protein sequence ID" value="BAG52859.1"/>
    <property type="molecule type" value="mRNA"/>
</dbReference>
<dbReference type="EMBL" id="AL021546">
    <property type="status" value="NOT_ANNOTATED_CDS"/>
    <property type="molecule type" value="Genomic_DNA"/>
</dbReference>
<dbReference type="EMBL" id="BC107145">
    <property type="protein sequence ID" value="AAI07146.1"/>
    <property type="molecule type" value="mRNA"/>
</dbReference>
<dbReference type="EMBL" id="BC107146">
    <property type="protein sequence ID" value="AAI07147.1"/>
    <property type="molecule type" value="mRNA"/>
</dbReference>
<dbReference type="CCDS" id="CCDS31911.1"/>
<dbReference type="PIR" id="T09477">
    <property type="entry name" value="T09477"/>
</dbReference>
<dbReference type="RefSeq" id="NP_789788.1">
    <property type="nucleotide sequence ID" value="NM_176818.3"/>
</dbReference>
<dbReference type="BioGRID" id="129569">
    <property type="interactions" value="59"/>
</dbReference>
<dbReference type="ComplexPortal" id="CPX-6174">
    <property type="entry name" value="Mitochondrial glutamyl-tRNA(Gln) amidotransferase complex"/>
</dbReference>
<dbReference type="CORUM" id="O43716"/>
<dbReference type="DIP" id="DIP-48969N"/>
<dbReference type="FunCoup" id="O43716">
    <property type="interactions" value="793"/>
</dbReference>
<dbReference type="IntAct" id="O43716">
    <property type="interactions" value="34"/>
</dbReference>
<dbReference type="MINT" id="O43716"/>
<dbReference type="STRING" id="9606.ENSP00000446872"/>
<dbReference type="GlyGen" id="O43716">
    <property type="glycosylation" value="1 site, 1 O-linked glycan (1 site)"/>
</dbReference>
<dbReference type="iPTMnet" id="O43716"/>
<dbReference type="MetOSite" id="O43716"/>
<dbReference type="PhosphoSitePlus" id="O43716"/>
<dbReference type="BioMuta" id="GATC"/>
<dbReference type="jPOST" id="O43716"/>
<dbReference type="MassIVE" id="O43716"/>
<dbReference type="PaxDb" id="9606-ENSP00000446872"/>
<dbReference type="PeptideAtlas" id="O43716"/>
<dbReference type="ProteomicsDB" id="49132"/>
<dbReference type="Pumba" id="O43716"/>
<dbReference type="Antibodypedia" id="56388">
    <property type="antibodies" value="55 antibodies from 18 providers"/>
</dbReference>
<dbReference type="DNASU" id="283459"/>
<dbReference type="Ensembl" id="ENST00000551765.6">
    <property type="protein sequence ID" value="ENSP00000446872.1"/>
    <property type="gene ID" value="ENSG00000257218.6"/>
</dbReference>
<dbReference type="GeneID" id="283459"/>
<dbReference type="KEGG" id="hsa:283459"/>
<dbReference type="MANE-Select" id="ENST00000551765.6">
    <property type="protein sequence ID" value="ENSP00000446872.1"/>
    <property type="RefSeq nucleotide sequence ID" value="NM_176818.3"/>
    <property type="RefSeq protein sequence ID" value="NP_789788.1"/>
</dbReference>
<dbReference type="UCSC" id="uc010szi.3">
    <property type="organism name" value="human"/>
</dbReference>
<dbReference type="AGR" id="HGNC:25068"/>
<dbReference type="CTD" id="283459"/>
<dbReference type="DisGeNET" id="283459"/>
<dbReference type="GeneCards" id="GATC"/>
<dbReference type="HGNC" id="HGNC:25068">
    <property type="gene designation" value="GATC"/>
</dbReference>
<dbReference type="HPA" id="ENSG00000257218">
    <property type="expression patterns" value="Low tissue specificity"/>
</dbReference>
<dbReference type="MalaCards" id="GATC"/>
<dbReference type="MIM" id="617210">
    <property type="type" value="gene"/>
</dbReference>
<dbReference type="MIM" id="618839">
    <property type="type" value="phenotype"/>
</dbReference>
<dbReference type="neXtProt" id="NX_O43716"/>
<dbReference type="OpenTargets" id="ENSG00000257218"/>
<dbReference type="PharmGKB" id="PA162389278"/>
<dbReference type="VEuPathDB" id="HostDB:ENSG00000257218"/>
<dbReference type="eggNOG" id="KOG4247">
    <property type="taxonomic scope" value="Eukaryota"/>
</dbReference>
<dbReference type="GeneTree" id="ENSGT00390000018351"/>
<dbReference type="HOGENOM" id="CLU_105899_0_2_1"/>
<dbReference type="InParanoid" id="O43716"/>
<dbReference type="OMA" id="RCAKRTD"/>
<dbReference type="OrthoDB" id="5394539at2759"/>
<dbReference type="PAN-GO" id="O43716">
    <property type="GO annotations" value="5 GO annotations based on evolutionary models"/>
</dbReference>
<dbReference type="PhylomeDB" id="O43716"/>
<dbReference type="BRENDA" id="6.3.5.7">
    <property type="organism ID" value="2681"/>
</dbReference>
<dbReference type="PathwayCommons" id="O43716"/>
<dbReference type="SignaLink" id="O43716"/>
<dbReference type="BioGRID-ORCS" id="283459">
    <property type="hits" value="170 hits in 1150 CRISPR screens"/>
</dbReference>
<dbReference type="ChiTaRS" id="GATC">
    <property type="organism name" value="human"/>
</dbReference>
<dbReference type="GenomeRNAi" id="283459"/>
<dbReference type="Pharos" id="O43716">
    <property type="development level" value="Tbio"/>
</dbReference>
<dbReference type="PRO" id="PR:O43716"/>
<dbReference type="Proteomes" id="UP000005640">
    <property type="component" value="Chromosome 12"/>
</dbReference>
<dbReference type="RNAct" id="O43716">
    <property type="molecule type" value="protein"/>
</dbReference>
<dbReference type="Bgee" id="ENSG00000257218">
    <property type="expression patterns" value="Expressed in tendon of biceps brachii and 188 other cell types or tissues"/>
</dbReference>
<dbReference type="ExpressionAtlas" id="O43716">
    <property type="expression patterns" value="baseline and differential"/>
</dbReference>
<dbReference type="GO" id="GO:0030956">
    <property type="term" value="C:glutamyl-tRNA(Gln) amidotransferase complex"/>
    <property type="evidence" value="ECO:0000314"/>
    <property type="project" value="UniProtKB"/>
</dbReference>
<dbReference type="GO" id="GO:0005739">
    <property type="term" value="C:mitochondrion"/>
    <property type="evidence" value="ECO:0000314"/>
    <property type="project" value="UniProtKB"/>
</dbReference>
<dbReference type="GO" id="GO:0005524">
    <property type="term" value="F:ATP binding"/>
    <property type="evidence" value="ECO:0007669"/>
    <property type="project" value="UniProtKB-KW"/>
</dbReference>
<dbReference type="GO" id="GO:0050567">
    <property type="term" value="F:glutaminyl-tRNA synthase (glutamine-hydrolyzing) activity"/>
    <property type="evidence" value="ECO:0007669"/>
    <property type="project" value="UniProtKB-UniRule"/>
</dbReference>
<dbReference type="GO" id="GO:0070681">
    <property type="term" value="P:glutaminyl-tRNAGln biosynthesis via transamidation"/>
    <property type="evidence" value="ECO:0000314"/>
    <property type="project" value="UniProtKB"/>
</dbReference>
<dbReference type="GO" id="GO:0032543">
    <property type="term" value="P:mitochondrial translation"/>
    <property type="evidence" value="ECO:0000315"/>
    <property type="project" value="UniProtKB"/>
</dbReference>
<dbReference type="GO" id="GO:0006450">
    <property type="term" value="P:regulation of translational fidelity"/>
    <property type="evidence" value="ECO:0007669"/>
    <property type="project" value="InterPro"/>
</dbReference>
<dbReference type="HAMAP" id="MF_00122">
    <property type="entry name" value="GatC"/>
    <property type="match status" value="1"/>
</dbReference>
<dbReference type="InterPro" id="IPR036113">
    <property type="entry name" value="Asp/Glu-ADT_sf_sub_c"/>
</dbReference>
<dbReference type="InterPro" id="IPR003837">
    <property type="entry name" value="GatC"/>
</dbReference>
<dbReference type="NCBIfam" id="TIGR00135">
    <property type="entry name" value="gatC"/>
    <property type="match status" value="1"/>
</dbReference>
<dbReference type="PANTHER" id="PTHR15004">
    <property type="entry name" value="GLUTAMYL-TRNA(GLN) AMIDOTRANSFERASE SUBUNIT C, MITOCHONDRIAL"/>
    <property type="match status" value="1"/>
</dbReference>
<dbReference type="PANTHER" id="PTHR15004:SF0">
    <property type="entry name" value="GLUTAMYL-TRNA(GLN) AMIDOTRANSFERASE SUBUNIT C, MITOCHONDRIAL"/>
    <property type="match status" value="1"/>
</dbReference>
<dbReference type="Pfam" id="PF02686">
    <property type="entry name" value="GatC"/>
    <property type="match status" value="1"/>
</dbReference>
<dbReference type="SUPFAM" id="SSF141000">
    <property type="entry name" value="Glu-tRNAGln amidotransferase C subunit"/>
    <property type="match status" value="1"/>
</dbReference>
<protein>
    <recommendedName>
        <fullName evidence="1">Glutamyl-tRNA(Gln) amidotransferase subunit C, mitochondrial</fullName>
        <shortName evidence="1">Glu-AdT subunit C</shortName>
        <ecNumber evidence="1">6.3.5.-</ecNumber>
    </recommendedName>
    <alternativeName>
        <fullName>Protein 15E1.2</fullName>
    </alternativeName>
</protein>
<organism>
    <name type="scientific">Homo sapiens</name>
    <name type="common">Human</name>
    <dbReference type="NCBI Taxonomy" id="9606"/>
    <lineage>
        <taxon>Eukaryota</taxon>
        <taxon>Metazoa</taxon>
        <taxon>Chordata</taxon>
        <taxon>Craniata</taxon>
        <taxon>Vertebrata</taxon>
        <taxon>Euteleostomi</taxon>
        <taxon>Mammalia</taxon>
        <taxon>Eutheria</taxon>
        <taxon>Euarchontoglires</taxon>
        <taxon>Primates</taxon>
        <taxon>Haplorrhini</taxon>
        <taxon>Catarrhini</taxon>
        <taxon>Hominidae</taxon>
        <taxon>Homo</taxon>
    </lineage>
</organism>
<sequence length="136" mass="15086">MWSRLVWLGLRAPLGGRQGFTSKADPQGSGRITAAVIEHLERLALVDFGSREAVARLEKAIAFADRLRAVDTDGVEPMESVLEDRCLYLRSDNVVEGNCADELLQNSHRVVEEYFVAPPGNISLPKLDEQEPFPHS</sequence>
<evidence type="ECO:0000255" key="1">
    <source>
        <dbReference type="HAMAP-Rule" id="MF_03149"/>
    </source>
</evidence>
<evidence type="ECO:0000269" key="2">
    <source>
    </source>
</evidence>
<evidence type="ECO:0000269" key="3">
    <source>
    </source>
</evidence>
<keyword id="KW-0067">ATP-binding</keyword>
<keyword id="KW-0225">Disease variant</keyword>
<keyword id="KW-0436">Ligase</keyword>
<keyword id="KW-0496">Mitochondrion</keyword>
<keyword id="KW-0547">Nucleotide-binding</keyword>
<keyword id="KW-1274">Primary mitochondrial disease</keyword>
<keyword id="KW-0648">Protein biosynthesis</keyword>
<keyword id="KW-1267">Proteomics identification</keyword>
<keyword id="KW-1185">Reference proteome</keyword>
<accession>O43716</accession>
<accession>B3KSU7</accession>
<accession>Q3B824</accession>
<accession>Q3KNR8</accession>
<proteinExistence type="evidence at protein level"/>
<name>GATC_HUMAN</name>
<feature type="chain" id="PRO_0000105365" description="Glutamyl-tRNA(Gln) amidotransferase subunit C, mitochondrial">
    <location>
        <begin position="1"/>
        <end position="136"/>
    </location>
</feature>
<feature type="sequence variant" id="VAR_049129" description="In dbSNP:rs17431446.">
    <original>S</original>
    <variation>L</variation>
    <location>
        <position position="3"/>
    </location>
</feature>
<feature type="sequence variant" id="VAR_083987" description="In COXPD42; decreased protein abundance; dbSNP:rs1370579526." evidence="3">
    <original>M</original>
    <variation>R</variation>
    <location>
        <position position="78"/>
    </location>
</feature>
<comment type="function">
    <text evidence="1 2">Allows the formation of correctly charged Gln-tRNA(Gln) through the transamidation of misacylated Glu-tRNA(Gln) in the mitochondria. The reaction takes place in the presence of glutamine and ATP through an activated gamma-phospho-Glu-tRNA(Gln).</text>
</comment>
<comment type="catalytic activity">
    <reaction evidence="1">
        <text>L-glutamyl-tRNA(Gln) + L-glutamine + ATP + H2O = L-glutaminyl-tRNA(Gln) + L-glutamate + ADP + phosphate + H(+)</text>
        <dbReference type="Rhea" id="RHEA:17521"/>
        <dbReference type="Rhea" id="RHEA-COMP:9681"/>
        <dbReference type="Rhea" id="RHEA-COMP:9684"/>
        <dbReference type="ChEBI" id="CHEBI:15377"/>
        <dbReference type="ChEBI" id="CHEBI:15378"/>
        <dbReference type="ChEBI" id="CHEBI:29985"/>
        <dbReference type="ChEBI" id="CHEBI:30616"/>
        <dbReference type="ChEBI" id="CHEBI:43474"/>
        <dbReference type="ChEBI" id="CHEBI:58359"/>
        <dbReference type="ChEBI" id="CHEBI:78520"/>
        <dbReference type="ChEBI" id="CHEBI:78521"/>
        <dbReference type="ChEBI" id="CHEBI:456216"/>
    </reaction>
</comment>
<comment type="subunit">
    <text>Subunit of the heterotrimeric GatCAB amidotransferase (AdT) complex, composed of A (QRSL1), B (GATB) and C (GATC) subunits.</text>
</comment>
<comment type="interaction">
    <interactant intactId="EBI-6929453">
        <id>O43716</id>
    </interactant>
    <interactant intactId="EBI-79934">
        <id>P09917</id>
        <label>ALOX5</label>
    </interactant>
    <organismsDiffer>false</organismsDiffer>
    <experiments>6</experiments>
</comment>
<comment type="interaction">
    <interactant intactId="EBI-6929453">
        <id>O43716</id>
    </interactant>
    <interactant intactId="EBI-1188472">
        <id>P78358</id>
        <label>CTAG1B</label>
    </interactant>
    <organismsDiffer>false</organismsDiffer>
    <experiments>3</experiments>
</comment>
<comment type="interaction">
    <interactant intactId="EBI-6929453">
        <id>O43716</id>
    </interactant>
    <interactant intactId="EBI-3925755">
        <id>Q6ZWL3</id>
        <label>CYP4V2</label>
    </interactant>
    <organismsDiffer>false</organismsDiffer>
    <experiments>2</experiments>
</comment>
<comment type="interaction">
    <interactant intactId="EBI-6929453">
        <id>O43716</id>
    </interactant>
    <interactant intactId="EBI-740220">
        <id>O14964</id>
        <label>HGS</label>
    </interactant>
    <organismsDiffer>false</organismsDiffer>
    <experiments>3</experiments>
</comment>
<comment type="interaction">
    <interactant intactId="EBI-6929453">
        <id>O43716</id>
    </interactant>
    <interactant intactId="EBI-2856796">
        <id>Q9H0R6</id>
        <label>QRSL1</label>
    </interactant>
    <organismsDiffer>false</organismsDiffer>
    <experiments>6</experiments>
</comment>
<comment type="interaction">
    <interactant intactId="EBI-6929453">
        <id>O43716</id>
    </interactant>
    <interactant intactId="EBI-1051785">
        <id>Q05519</id>
        <label>SRSF11</label>
    </interactant>
    <organismsDiffer>false</organismsDiffer>
    <experiments>3</experiments>
</comment>
<comment type="interaction">
    <interactant intactId="EBI-6929453">
        <id>O43716</id>
    </interactant>
    <interactant intactId="EBI-11975029">
        <id>Q05519-2</id>
        <label>SRSF11</label>
    </interactant>
    <organismsDiffer>false</organismsDiffer>
    <experiments>6</experiments>
</comment>
<comment type="interaction">
    <interactant intactId="EBI-6929453">
        <id>O43716</id>
    </interactant>
    <interactant intactId="EBI-11954062">
        <id>Q6UXN7</id>
        <label>TOMM20L</label>
    </interactant>
    <organismsDiffer>false</organismsDiffer>
    <experiments>3</experiments>
</comment>
<comment type="subcellular location">
    <subcellularLocation>
        <location evidence="1 2">Mitochondrion</location>
    </subcellularLocation>
</comment>
<comment type="disease" evidence="3">
    <disease id="DI-05810">
        <name>Combined oxidative phosphorylation deficiency 42</name>
        <acronym>COXPD42</acronym>
        <description>An autosomal recessive mitochondrial disorder characterized by onset in the first months of life, cardiomyopathy, respiratory insufficiency, lactic acidosis, anemia, and variable impairment of mitochondrial respiratory complexes I, III, and IV. Death occurs in infancy.</description>
        <dbReference type="MIM" id="618839"/>
    </disease>
    <text>The disease is caused by variants affecting the gene represented in this entry.</text>
</comment>
<comment type="miscellaneous">
    <text evidence="1">This protein may be expected to contain an N-terminal transit peptide but none has been predicted.</text>
</comment>
<comment type="similarity">
    <text evidence="1">Belongs to the GatC family.</text>
</comment>
<reference key="1">
    <citation type="journal article" date="2004" name="Nat. Genet.">
        <title>Complete sequencing and characterization of 21,243 full-length human cDNAs.</title>
        <authorList>
            <person name="Ota T."/>
            <person name="Suzuki Y."/>
            <person name="Nishikawa T."/>
            <person name="Otsuki T."/>
            <person name="Sugiyama T."/>
            <person name="Irie R."/>
            <person name="Wakamatsu A."/>
            <person name="Hayashi K."/>
            <person name="Sato H."/>
            <person name="Nagai K."/>
            <person name="Kimura K."/>
            <person name="Makita H."/>
            <person name="Sekine M."/>
            <person name="Obayashi M."/>
            <person name="Nishi T."/>
            <person name="Shibahara T."/>
            <person name="Tanaka T."/>
            <person name="Ishii S."/>
            <person name="Yamamoto J."/>
            <person name="Saito K."/>
            <person name="Kawai Y."/>
            <person name="Isono Y."/>
            <person name="Nakamura Y."/>
            <person name="Nagahari K."/>
            <person name="Murakami K."/>
            <person name="Yasuda T."/>
            <person name="Iwayanagi T."/>
            <person name="Wagatsuma M."/>
            <person name="Shiratori A."/>
            <person name="Sudo H."/>
            <person name="Hosoiri T."/>
            <person name="Kaku Y."/>
            <person name="Kodaira H."/>
            <person name="Kondo H."/>
            <person name="Sugawara M."/>
            <person name="Takahashi M."/>
            <person name="Kanda K."/>
            <person name="Yokoi T."/>
            <person name="Furuya T."/>
            <person name="Kikkawa E."/>
            <person name="Omura Y."/>
            <person name="Abe K."/>
            <person name="Kamihara K."/>
            <person name="Katsuta N."/>
            <person name="Sato K."/>
            <person name="Tanikawa M."/>
            <person name="Yamazaki M."/>
            <person name="Ninomiya K."/>
            <person name="Ishibashi T."/>
            <person name="Yamashita H."/>
            <person name="Murakawa K."/>
            <person name="Fujimori K."/>
            <person name="Tanai H."/>
            <person name="Kimata M."/>
            <person name="Watanabe M."/>
            <person name="Hiraoka S."/>
            <person name="Chiba Y."/>
            <person name="Ishida S."/>
            <person name="Ono Y."/>
            <person name="Takiguchi S."/>
            <person name="Watanabe S."/>
            <person name="Yosida M."/>
            <person name="Hotuta T."/>
            <person name="Kusano J."/>
            <person name="Kanehori K."/>
            <person name="Takahashi-Fujii A."/>
            <person name="Hara H."/>
            <person name="Tanase T.-O."/>
            <person name="Nomura Y."/>
            <person name="Togiya S."/>
            <person name="Komai F."/>
            <person name="Hara R."/>
            <person name="Takeuchi K."/>
            <person name="Arita M."/>
            <person name="Imose N."/>
            <person name="Musashino K."/>
            <person name="Yuuki H."/>
            <person name="Oshima A."/>
            <person name="Sasaki N."/>
            <person name="Aotsuka S."/>
            <person name="Yoshikawa Y."/>
            <person name="Matsunawa H."/>
            <person name="Ichihara T."/>
            <person name="Shiohata N."/>
            <person name="Sano S."/>
            <person name="Moriya S."/>
            <person name="Momiyama H."/>
            <person name="Satoh N."/>
            <person name="Takami S."/>
            <person name="Terashima Y."/>
            <person name="Suzuki O."/>
            <person name="Nakagawa S."/>
            <person name="Senoh A."/>
            <person name="Mizoguchi H."/>
            <person name="Goto Y."/>
            <person name="Shimizu F."/>
            <person name="Wakebe H."/>
            <person name="Hishigaki H."/>
            <person name="Watanabe T."/>
            <person name="Sugiyama A."/>
            <person name="Takemoto M."/>
            <person name="Kawakami B."/>
            <person name="Yamazaki M."/>
            <person name="Watanabe K."/>
            <person name="Kumagai A."/>
            <person name="Itakura S."/>
            <person name="Fukuzumi Y."/>
            <person name="Fujimori Y."/>
            <person name="Komiyama M."/>
            <person name="Tashiro H."/>
            <person name="Tanigami A."/>
            <person name="Fujiwara T."/>
            <person name="Ono T."/>
            <person name="Yamada K."/>
            <person name="Fujii Y."/>
            <person name="Ozaki K."/>
            <person name="Hirao M."/>
            <person name="Ohmori Y."/>
            <person name="Kawabata A."/>
            <person name="Hikiji T."/>
            <person name="Kobatake N."/>
            <person name="Inagaki H."/>
            <person name="Ikema Y."/>
            <person name="Okamoto S."/>
            <person name="Okitani R."/>
            <person name="Kawakami T."/>
            <person name="Noguchi S."/>
            <person name="Itoh T."/>
            <person name="Shigeta K."/>
            <person name="Senba T."/>
            <person name="Matsumura K."/>
            <person name="Nakajima Y."/>
            <person name="Mizuno T."/>
            <person name="Morinaga M."/>
            <person name="Sasaki M."/>
            <person name="Togashi T."/>
            <person name="Oyama M."/>
            <person name="Hata H."/>
            <person name="Watanabe M."/>
            <person name="Komatsu T."/>
            <person name="Mizushima-Sugano J."/>
            <person name="Satoh T."/>
            <person name="Shirai Y."/>
            <person name="Takahashi Y."/>
            <person name="Nakagawa K."/>
            <person name="Okumura K."/>
            <person name="Nagase T."/>
            <person name="Nomura N."/>
            <person name="Kikuchi H."/>
            <person name="Masuho Y."/>
            <person name="Yamashita R."/>
            <person name="Nakai K."/>
            <person name="Yada T."/>
            <person name="Nakamura Y."/>
            <person name="Ohara O."/>
            <person name="Isogai T."/>
            <person name="Sugano S."/>
        </authorList>
    </citation>
    <scope>NUCLEOTIDE SEQUENCE [LARGE SCALE MRNA]</scope>
    <source>
        <tissue>Cerebellum</tissue>
    </source>
</reference>
<reference key="2">
    <citation type="journal article" date="2006" name="Nature">
        <title>The finished DNA sequence of human chromosome 12.</title>
        <authorList>
            <person name="Scherer S.E."/>
            <person name="Muzny D.M."/>
            <person name="Buhay C.J."/>
            <person name="Chen R."/>
            <person name="Cree A."/>
            <person name="Ding Y."/>
            <person name="Dugan-Rocha S."/>
            <person name="Gill R."/>
            <person name="Gunaratne P."/>
            <person name="Harris R.A."/>
            <person name="Hawes A.C."/>
            <person name="Hernandez J."/>
            <person name="Hodgson A.V."/>
            <person name="Hume J."/>
            <person name="Jackson A."/>
            <person name="Khan Z.M."/>
            <person name="Kovar-Smith C."/>
            <person name="Lewis L.R."/>
            <person name="Lozado R.J."/>
            <person name="Metzker M.L."/>
            <person name="Milosavljevic A."/>
            <person name="Miner G.R."/>
            <person name="Montgomery K.T."/>
            <person name="Morgan M.B."/>
            <person name="Nazareth L.V."/>
            <person name="Scott G."/>
            <person name="Sodergren E."/>
            <person name="Song X.-Z."/>
            <person name="Steffen D."/>
            <person name="Lovering R.C."/>
            <person name="Wheeler D.A."/>
            <person name="Worley K.C."/>
            <person name="Yuan Y."/>
            <person name="Zhang Z."/>
            <person name="Adams C.Q."/>
            <person name="Ansari-Lari M.A."/>
            <person name="Ayele M."/>
            <person name="Brown M.J."/>
            <person name="Chen G."/>
            <person name="Chen Z."/>
            <person name="Clerc-Blankenburg K.P."/>
            <person name="Davis C."/>
            <person name="Delgado O."/>
            <person name="Dinh H.H."/>
            <person name="Draper H."/>
            <person name="Gonzalez-Garay M.L."/>
            <person name="Havlak P."/>
            <person name="Jackson L.R."/>
            <person name="Jacob L.S."/>
            <person name="Kelly S.H."/>
            <person name="Li L."/>
            <person name="Li Z."/>
            <person name="Liu J."/>
            <person name="Liu W."/>
            <person name="Lu J."/>
            <person name="Maheshwari M."/>
            <person name="Nguyen B.-V."/>
            <person name="Okwuonu G.O."/>
            <person name="Pasternak S."/>
            <person name="Perez L.M."/>
            <person name="Plopper F.J.H."/>
            <person name="Santibanez J."/>
            <person name="Shen H."/>
            <person name="Tabor P.E."/>
            <person name="Verduzco D."/>
            <person name="Waldron L."/>
            <person name="Wang Q."/>
            <person name="Williams G.A."/>
            <person name="Zhang J."/>
            <person name="Zhou J."/>
            <person name="Allen C.C."/>
            <person name="Amin A.G."/>
            <person name="Anyalebechi V."/>
            <person name="Bailey M."/>
            <person name="Barbaria J.A."/>
            <person name="Bimage K.E."/>
            <person name="Bryant N.P."/>
            <person name="Burch P.E."/>
            <person name="Burkett C.E."/>
            <person name="Burrell K.L."/>
            <person name="Calderon E."/>
            <person name="Cardenas V."/>
            <person name="Carter K."/>
            <person name="Casias K."/>
            <person name="Cavazos I."/>
            <person name="Cavazos S.R."/>
            <person name="Ceasar H."/>
            <person name="Chacko J."/>
            <person name="Chan S.N."/>
            <person name="Chavez D."/>
            <person name="Christopoulos C."/>
            <person name="Chu J."/>
            <person name="Cockrell R."/>
            <person name="Cox C.D."/>
            <person name="Dang M."/>
            <person name="Dathorne S.R."/>
            <person name="David R."/>
            <person name="Davis C.M."/>
            <person name="Davy-Carroll L."/>
            <person name="Deshazo D.R."/>
            <person name="Donlin J.E."/>
            <person name="D'Souza L."/>
            <person name="Eaves K.A."/>
            <person name="Egan A."/>
            <person name="Emery-Cohen A.J."/>
            <person name="Escotto M."/>
            <person name="Flagg N."/>
            <person name="Forbes L.D."/>
            <person name="Gabisi A.M."/>
            <person name="Garza M."/>
            <person name="Hamilton C."/>
            <person name="Henderson N."/>
            <person name="Hernandez O."/>
            <person name="Hines S."/>
            <person name="Hogues M.E."/>
            <person name="Huang M."/>
            <person name="Idlebird D.G."/>
            <person name="Johnson R."/>
            <person name="Jolivet A."/>
            <person name="Jones S."/>
            <person name="Kagan R."/>
            <person name="King L.M."/>
            <person name="Leal B."/>
            <person name="Lebow H."/>
            <person name="Lee S."/>
            <person name="LeVan J.M."/>
            <person name="Lewis L.C."/>
            <person name="London P."/>
            <person name="Lorensuhewa L.M."/>
            <person name="Loulseged H."/>
            <person name="Lovett D.A."/>
            <person name="Lucier A."/>
            <person name="Lucier R.L."/>
            <person name="Ma J."/>
            <person name="Madu R.C."/>
            <person name="Mapua P."/>
            <person name="Martindale A.D."/>
            <person name="Martinez E."/>
            <person name="Massey E."/>
            <person name="Mawhiney S."/>
            <person name="Meador M.G."/>
            <person name="Mendez S."/>
            <person name="Mercado C."/>
            <person name="Mercado I.C."/>
            <person name="Merritt C.E."/>
            <person name="Miner Z.L."/>
            <person name="Minja E."/>
            <person name="Mitchell T."/>
            <person name="Mohabbat F."/>
            <person name="Mohabbat K."/>
            <person name="Montgomery B."/>
            <person name="Moore N."/>
            <person name="Morris S."/>
            <person name="Munidasa M."/>
            <person name="Ngo R.N."/>
            <person name="Nguyen N.B."/>
            <person name="Nickerson E."/>
            <person name="Nwaokelemeh O.O."/>
            <person name="Nwokenkwo S."/>
            <person name="Obregon M."/>
            <person name="Oguh M."/>
            <person name="Oragunye N."/>
            <person name="Oviedo R.J."/>
            <person name="Parish B.J."/>
            <person name="Parker D.N."/>
            <person name="Parrish J."/>
            <person name="Parks K.L."/>
            <person name="Paul H.A."/>
            <person name="Payton B.A."/>
            <person name="Perez A."/>
            <person name="Perrin W."/>
            <person name="Pickens A."/>
            <person name="Primus E.L."/>
            <person name="Pu L.-L."/>
            <person name="Puazo M."/>
            <person name="Quiles M.M."/>
            <person name="Quiroz J.B."/>
            <person name="Rabata D."/>
            <person name="Reeves K."/>
            <person name="Ruiz S.J."/>
            <person name="Shao H."/>
            <person name="Sisson I."/>
            <person name="Sonaike T."/>
            <person name="Sorelle R.P."/>
            <person name="Sutton A.E."/>
            <person name="Svatek A.F."/>
            <person name="Svetz L.A."/>
            <person name="Tamerisa K.S."/>
            <person name="Taylor T.R."/>
            <person name="Teague B."/>
            <person name="Thomas N."/>
            <person name="Thorn R.D."/>
            <person name="Trejos Z.Y."/>
            <person name="Trevino B.K."/>
            <person name="Ukegbu O.N."/>
            <person name="Urban J.B."/>
            <person name="Vasquez L.I."/>
            <person name="Vera V.A."/>
            <person name="Villasana D.M."/>
            <person name="Wang L."/>
            <person name="Ward-Moore S."/>
            <person name="Warren J.T."/>
            <person name="Wei X."/>
            <person name="White F."/>
            <person name="Williamson A.L."/>
            <person name="Wleczyk R."/>
            <person name="Wooden H.S."/>
            <person name="Wooden S.H."/>
            <person name="Yen J."/>
            <person name="Yoon L."/>
            <person name="Yoon V."/>
            <person name="Zorrilla S.E."/>
            <person name="Nelson D."/>
            <person name="Kucherlapati R."/>
            <person name="Weinstock G."/>
            <person name="Gibbs R.A."/>
        </authorList>
    </citation>
    <scope>NUCLEOTIDE SEQUENCE [LARGE SCALE GENOMIC DNA]</scope>
</reference>
<reference key="3">
    <citation type="journal article" date="2004" name="Genome Res.">
        <title>The status, quality, and expansion of the NIH full-length cDNA project: the Mammalian Gene Collection (MGC).</title>
        <authorList>
            <consortium name="The MGC Project Team"/>
        </authorList>
    </citation>
    <scope>NUCLEOTIDE SEQUENCE [LARGE SCALE MRNA]</scope>
</reference>
<reference key="4">
    <citation type="journal article" date="2009" name="Proc. Natl. Acad. Sci. U.S.A.">
        <title>Biogenesis of glutaminyl-mt tRNAGln in human mitochondria.</title>
        <authorList>
            <person name="Nagao A."/>
            <person name="Suzuki T."/>
            <person name="Katoh T."/>
            <person name="Sakaguchi Y."/>
            <person name="Suzuki T."/>
        </authorList>
    </citation>
    <scope>FUNCTION</scope>
    <scope>SUBCELLULAR LOCATION</scope>
</reference>
<reference key="5">
    <citation type="journal article" date="2018" name="Nat. Commun.">
        <title>Pathogenic variants in glutamyl-tRNAGln amidotransferase subunits cause a lethal mitochondrial cardiomyopathy disorder.</title>
        <authorList>
            <person name="Friederich M.W."/>
            <person name="Timal S."/>
            <person name="Powell C.A."/>
            <person name="Dallabona C."/>
            <person name="Kurolap A."/>
            <person name="Palacios-Zambrano S."/>
            <person name="Bratkovic D."/>
            <person name="Derks T.G.J."/>
            <person name="Bick D."/>
            <person name="Bouman K."/>
            <person name="Chatfield K.C."/>
            <person name="Damouny-Naoum N."/>
            <person name="Dishop M.K."/>
            <person name="Falik-Zaccai T.C."/>
            <person name="Fares F."/>
            <person name="Fedida A."/>
            <person name="Ferrero I."/>
            <person name="Gallagher R.C."/>
            <person name="Garesse R."/>
            <person name="Gilberti M."/>
            <person name="Gonzalez C."/>
            <person name="Gowan K."/>
            <person name="Habib C."/>
            <person name="Halligan R.K."/>
            <person name="Kalfon L."/>
            <person name="Knight K."/>
            <person name="Lefeber D."/>
            <person name="Mamblona L."/>
            <person name="Mandel H."/>
            <person name="Mory A."/>
            <person name="Ottoson J."/>
            <person name="Paperna T."/>
            <person name="Pruijn G.J.M."/>
            <person name="Rebelo-Guiomar P.F."/>
            <person name="Saada A."/>
            <person name="Sainz B. Jr."/>
            <person name="Salvemini H."/>
            <person name="Schoots M.H."/>
            <person name="Smeitink J.A."/>
            <person name="Szukszto M.J."/>
            <person name="Ter Horst H.J."/>
            <person name="van den Brandt F."/>
            <person name="van Spronsen F.J."/>
            <person name="Veltman J.A."/>
            <person name="Wartchow E."/>
            <person name="Wintjes L.T."/>
            <person name="Zohar Y."/>
            <person name="Fernandez-Moreno M.A."/>
            <person name="Baris H.N."/>
            <person name="Donnini C."/>
            <person name="Minczuk M."/>
            <person name="Rodenburg R.J."/>
            <person name="Van Hove J.L.K."/>
        </authorList>
    </citation>
    <scope>INVOLVEMENT IN COXPD42</scope>
    <scope>VARIANT COXPD42 ARG-78</scope>
</reference>